<dbReference type="EMBL" id="CP000090">
    <property type="protein sequence ID" value="AAZ60375.1"/>
    <property type="molecule type" value="Genomic_DNA"/>
</dbReference>
<dbReference type="SMR" id="Q473Q8"/>
<dbReference type="STRING" id="264198.Reut_A0996"/>
<dbReference type="KEGG" id="reu:Reut_A0996"/>
<dbReference type="eggNOG" id="COG2371">
    <property type="taxonomic scope" value="Bacteria"/>
</dbReference>
<dbReference type="HOGENOM" id="CLU_093757_0_0_4"/>
<dbReference type="OrthoDB" id="5421304at2"/>
<dbReference type="GO" id="GO:0005737">
    <property type="term" value="C:cytoplasm"/>
    <property type="evidence" value="ECO:0007669"/>
    <property type="project" value="UniProtKB-SubCell"/>
</dbReference>
<dbReference type="GO" id="GO:0016151">
    <property type="term" value="F:nickel cation binding"/>
    <property type="evidence" value="ECO:0007669"/>
    <property type="project" value="UniProtKB-UniRule"/>
</dbReference>
<dbReference type="GO" id="GO:0051082">
    <property type="term" value="F:unfolded protein binding"/>
    <property type="evidence" value="ECO:0007669"/>
    <property type="project" value="UniProtKB-UniRule"/>
</dbReference>
<dbReference type="GO" id="GO:0006457">
    <property type="term" value="P:protein folding"/>
    <property type="evidence" value="ECO:0007669"/>
    <property type="project" value="InterPro"/>
</dbReference>
<dbReference type="GO" id="GO:0065003">
    <property type="term" value="P:protein-containing complex assembly"/>
    <property type="evidence" value="ECO:0007669"/>
    <property type="project" value="InterPro"/>
</dbReference>
<dbReference type="GO" id="GO:0019627">
    <property type="term" value="P:urea metabolic process"/>
    <property type="evidence" value="ECO:0007669"/>
    <property type="project" value="InterPro"/>
</dbReference>
<dbReference type="CDD" id="cd00571">
    <property type="entry name" value="UreE"/>
    <property type="match status" value="1"/>
</dbReference>
<dbReference type="Gene3D" id="2.60.260.20">
    <property type="entry name" value="Urease metallochaperone UreE, N-terminal domain"/>
    <property type="match status" value="1"/>
</dbReference>
<dbReference type="Gene3D" id="3.30.70.790">
    <property type="entry name" value="UreE, C-terminal domain"/>
    <property type="match status" value="1"/>
</dbReference>
<dbReference type="HAMAP" id="MF_00822">
    <property type="entry name" value="UreE"/>
    <property type="match status" value="1"/>
</dbReference>
<dbReference type="InterPro" id="IPR012406">
    <property type="entry name" value="UreE"/>
</dbReference>
<dbReference type="InterPro" id="IPR007864">
    <property type="entry name" value="UreE_C_dom"/>
</dbReference>
<dbReference type="InterPro" id="IPR004029">
    <property type="entry name" value="UreE_N"/>
</dbReference>
<dbReference type="InterPro" id="IPR036118">
    <property type="entry name" value="UreE_N_sf"/>
</dbReference>
<dbReference type="NCBIfam" id="NF009751">
    <property type="entry name" value="PRK13261.1-1"/>
    <property type="match status" value="1"/>
</dbReference>
<dbReference type="NCBIfam" id="NF009762">
    <property type="entry name" value="PRK13263.1"/>
    <property type="match status" value="1"/>
</dbReference>
<dbReference type="Pfam" id="PF05194">
    <property type="entry name" value="UreE_C"/>
    <property type="match status" value="1"/>
</dbReference>
<dbReference type="Pfam" id="PF02814">
    <property type="entry name" value="UreE_N"/>
    <property type="match status" value="1"/>
</dbReference>
<dbReference type="SMART" id="SM00988">
    <property type="entry name" value="UreE_N"/>
    <property type="match status" value="1"/>
</dbReference>
<dbReference type="SUPFAM" id="SSF69737">
    <property type="entry name" value="Urease metallochaperone UreE, C-terminal domain"/>
    <property type="match status" value="1"/>
</dbReference>
<dbReference type="SUPFAM" id="SSF69287">
    <property type="entry name" value="Urease metallochaperone UreE, N-terminal domain"/>
    <property type="match status" value="1"/>
</dbReference>
<protein>
    <recommendedName>
        <fullName evidence="1">Urease accessory protein UreE</fullName>
    </recommendedName>
</protein>
<gene>
    <name evidence="1" type="primary">ureE</name>
    <name type="ordered locus">Reut_A0996</name>
</gene>
<accession>Q473Q8</accession>
<keyword id="KW-0143">Chaperone</keyword>
<keyword id="KW-0963">Cytoplasm</keyword>
<keyword id="KW-0533">Nickel</keyword>
<keyword id="KW-0996">Nickel insertion</keyword>
<comment type="function">
    <text evidence="1">Involved in urease metallocenter assembly. Binds nickel. Probably functions as a nickel donor during metallocenter assembly.</text>
</comment>
<comment type="subcellular location">
    <subcellularLocation>
        <location evidence="1">Cytoplasm</location>
    </subcellularLocation>
</comment>
<comment type="similarity">
    <text evidence="1">Belongs to the UreE family.</text>
</comment>
<proteinExistence type="inferred from homology"/>
<evidence type="ECO:0000255" key="1">
    <source>
        <dbReference type="HAMAP-Rule" id="MF_00822"/>
    </source>
</evidence>
<evidence type="ECO:0000256" key="2">
    <source>
        <dbReference type="SAM" id="MobiDB-lite"/>
    </source>
</evidence>
<sequence>MLKIDKVLSAPHGIAAVLVRRAPKLVLPFGERSKSRLRAVLDNGDEAALFLPRGTVLRGGDLLIAEDGSFVEVQAAAERVLEVRAADQHGLMRAAYHLGNRHTPVEVGRDYLRLEFDPVLADMLARLRVQAVQIDAPFEPEAGAYGGGHKHGHDATFAEDYAAAQAVFHEHHGHDHDHGHSHSHSHSHSHSHSHSHDHDHDHDHEHDVKGHVHGPGCGHKH</sequence>
<reference key="1">
    <citation type="journal article" date="2010" name="PLoS ONE">
        <title>The complete multipartite genome sequence of Cupriavidus necator JMP134, a versatile pollutant degrader.</title>
        <authorList>
            <person name="Lykidis A."/>
            <person name="Perez-Pantoja D."/>
            <person name="Ledger T."/>
            <person name="Mavromatis K."/>
            <person name="Anderson I.J."/>
            <person name="Ivanova N.N."/>
            <person name="Hooper S.D."/>
            <person name="Lapidus A."/>
            <person name="Lucas S."/>
            <person name="Gonzalez B."/>
            <person name="Kyrpides N.C."/>
        </authorList>
    </citation>
    <scope>NUCLEOTIDE SEQUENCE [LARGE SCALE GENOMIC DNA]</scope>
    <source>
        <strain>JMP134 / LMG 1197</strain>
    </source>
</reference>
<name>UREE_CUPPJ</name>
<organism>
    <name type="scientific">Cupriavidus pinatubonensis (strain JMP 134 / LMG 1197)</name>
    <name type="common">Cupriavidus necator (strain JMP 134)</name>
    <dbReference type="NCBI Taxonomy" id="264198"/>
    <lineage>
        <taxon>Bacteria</taxon>
        <taxon>Pseudomonadati</taxon>
        <taxon>Pseudomonadota</taxon>
        <taxon>Betaproteobacteria</taxon>
        <taxon>Burkholderiales</taxon>
        <taxon>Burkholderiaceae</taxon>
        <taxon>Cupriavidus</taxon>
    </lineage>
</organism>
<feature type="chain" id="PRO_0000223429" description="Urease accessory protein UreE">
    <location>
        <begin position="1"/>
        <end position="221"/>
    </location>
</feature>
<feature type="region of interest" description="Disordered" evidence="2">
    <location>
        <begin position="171"/>
        <end position="221"/>
    </location>
</feature>
<feature type="compositionally biased region" description="Basic and acidic residues" evidence="2">
    <location>
        <begin position="171"/>
        <end position="180"/>
    </location>
</feature>
<feature type="compositionally biased region" description="Basic residues" evidence="2">
    <location>
        <begin position="181"/>
        <end position="193"/>
    </location>
</feature>
<feature type="compositionally biased region" description="Basic and acidic residues" evidence="2">
    <location>
        <begin position="194"/>
        <end position="210"/>
    </location>
</feature>